<accession>D8KY57</accession>
<reference key="1">
    <citation type="submission" date="2008-06" db="EMBL/GenBank/DDBJ databases">
        <title>Molecular cloning of cDNA for salivary secreted peptide from the bumblebee Bombus ignitus.</title>
        <authorList>
            <person name="Kim S.R."/>
            <person name="Yoon H.J."/>
            <person name="Park K.-H."/>
            <person name="Yun E.-Y."/>
            <person name="Kim I."/>
            <person name="Jin B.-R."/>
            <person name="Hwang J.-S."/>
        </authorList>
    </citation>
    <scope>NUCLEOTIDE SEQUENCE [MRNA]</scope>
    <source>
        <tissue>Salivary gland</tissue>
    </source>
</reference>
<comment type="subcellular location">
    <subcellularLocation>
        <location evidence="2">Secreted</location>
    </subcellularLocation>
</comment>
<evidence type="ECO:0000255" key="1"/>
<evidence type="ECO:0000305" key="2"/>
<name>SSP_BOMIG</name>
<proteinExistence type="evidence at transcript level"/>
<sequence>MGAQKTIAYLAIIAIAVIFAQVNTAPPVGHYAANNTNKSHNLVVGYRMPGDRLVLRQSVIKNSSWGRIVVEERTFNVSSWERITMIQALDQKTNGNGAYASITNGGPGNQNVTIRLKSQRGHGINFVIEIYSRY</sequence>
<feature type="signal peptide" evidence="1">
    <location>
        <begin position="1"/>
        <end position="24"/>
    </location>
</feature>
<feature type="chain" id="PRO_0000412826" description="Probable salivary secreted peptide">
    <location>
        <begin position="25"/>
        <end position="134"/>
    </location>
</feature>
<organism>
    <name type="scientific">Bombus ignitus</name>
    <name type="common">Bumblebee</name>
    <dbReference type="NCBI Taxonomy" id="130704"/>
    <lineage>
        <taxon>Eukaryota</taxon>
        <taxon>Metazoa</taxon>
        <taxon>Ecdysozoa</taxon>
        <taxon>Arthropoda</taxon>
        <taxon>Hexapoda</taxon>
        <taxon>Insecta</taxon>
        <taxon>Pterygota</taxon>
        <taxon>Neoptera</taxon>
        <taxon>Endopterygota</taxon>
        <taxon>Hymenoptera</taxon>
        <taxon>Apocrita</taxon>
        <taxon>Aculeata</taxon>
        <taxon>Apoidea</taxon>
        <taxon>Anthophila</taxon>
        <taxon>Apidae</taxon>
        <taxon>Bombus</taxon>
        <taxon>Bombus</taxon>
    </lineage>
</organism>
<dbReference type="EMBL" id="EU860214">
    <property type="protein sequence ID" value="ACJ54178.1"/>
    <property type="molecule type" value="mRNA"/>
</dbReference>
<dbReference type="GO" id="GO:0005576">
    <property type="term" value="C:extracellular region"/>
    <property type="evidence" value="ECO:0007669"/>
    <property type="project" value="UniProtKB-SubCell"/>
</dbReference>
<dbReference type="InterPro" id="IPR031734">
    <property type="entry name" value="MBF2"/>
</dbReference>
<dbReference type="PANTHER" id="PTHR37685">
    <property type="entry name" value="GEO11136P1-RELATED"/>
    <property type="match status" value="1"/>
</dbReference>
<dbReference type="PANTHER" id="PTHR37685:SF1">
    <property type="entry name" value="GEO11136P1-RELATED"/>
    <property type="match status" value="1"/>
</dbReference>
<dbReference type="Pfam" id="PF15868">
    <property type="entry name" value="MBF2"/>
    <property type="match status" value="1"/>
</dbReference>
<keyword id="KW-0964">Secreted</keyword>
<keyword id="KW-0732">Signal</keyword>
<protein>
    <recommendedName>
        <fullName>Probable salivary secreted peptide</fullName>
        <shortName>SSP</shortName>
    </recommendedName>
</protein>